<accession>Q5EAU3</accession>
<protein>
    <recommendedName>
        <fullName>Type II phosphatidylinositol 4,5-bisphosphate 4-phosphatase</fullName>
        <shortName>Type 2 PtdIns-4,5-P2 4-Ptase</shortName>
        <ecNumber evidence="2">3.1.3.78</ecNumber>
    </recommendedName>
    <alternativeName>
        <fullName>PtdIns-4,5-P2 4-Ptase II</fullName>
    </alternativeName>
    <alternativeName>
        <fullName>Transmembrane protein 55A</fullName>
    </alternativeName>
</protein>
<evidence type="ECO:0000250" key="1"/>
<evidence type="ECO:0000250" key="2">
    <source>
        <dbReference type="UniProtKB" id="Q8N4L2"/>
    </source>
</evidence>
<evidence type="ECO:0000255" key="3"/>
<evidence type="ECO:0000256" key="4">
    <source>
        <dbReference type="SAM" id="MobiDB-lite"/>
    </source>
</evidence>
<sequence length="256" mass="27999">MAADGIDERSPLISPSSGNVTPTAPPYIQENNLQAELPPPYTAIASPDAGGVPVINCRVCQSLINLDGKLHQHVVKCTVCNEATPIKTPPLGKKYVRCPCNCLLICKDISRRIGCPRPNCRRIINLGPVMLIPEEQPAQPALPVQPDGTRVVCGHCGNTFLWMELRFNTLAKCPHCKKISSVGSALPRRRCCTYITMGMICIFIGVGLTVGTQDFARRFHATYVSWAVAYLVGLVCLVRACYWGAIKFSYPEHSFA</sequence>
<keyword id="KW-0967">Endosome</keyword>
<keyword id="KW-0378">Hydrolase</keyword>
<keyword id="KW-0443">Lipid metabolism</keyword>
<keyword id="KW-0458">Lysosome</keyword>
<keyword id="KW-0472">Membrane</keyword>
<keyword id="KW-1185">Reference proteome</keyword>
<keyword id="KW-0812">Transmembrane</keyword>
<keyword id="KW-1133">Transmembrane helix</keyword>
<gene>
    <name evidence="2" type="primary">pip4p2</name>
    <name evidence="2" type="synonym">tmem55a</name>
</gene>
<organism>
    <name type="scientific">Xenopus laevis</name>
    <name type="common">African clawed frog</name>
    <dbReference type="NCBI Taxonomy" id="8355"/>
    <lineage>
        <taxon>Eukaryota</taxon>
        <taxon>Metazoa</taxon>
        <taxon>Chordata</taxon>
        <taxon>Craniata</taxon>
        <taxon>Vertebrata</taxon>
        <taxon>Euteleostomi</taxon>
        <taxon>Amphibia</taxon>
        <taxon>Batrachia</taxon>
        <taxon>Anura</taxon>
        <taxon>Pipoidea</taxon>
        <taxon>Pipidae</taxon>
        <taxon>Xenopodinae</taxon>
        <taxon>Xenopus</taxon>
        <taxon>Xenopus</taxon>
    </lineage>
</organism>
<name>PP4P2_XENLA</name>
<comment type="function">
    <text evidence="2">Catalyzes the hydrolysis of phosphatidylinositol-4,5-bisphosphate (PtdIns-4,5-P2) to phosphatidylinositol-4-phosphate (PtdIns-4-P).</text>
</comment>
<comment type="catalytic activity">
    <reaction evidence="2">
        <text>a 1,2-diacyl-sn-glycero-3-phospho-(1D-myo-inositol-4,5-bisphosphate) + H2O = a 1,2-diacyl-sn-glycero-3-phospho-(1D-myo-inositol-5-phosphate) + phosphate</text>
        <dbReference type="Rhea" id="RHEA:25674"/>
        <dbReference type="ChEBI" id="CHEBI:15377"/>
        <dbReference type="ChEBI" id="CHEBI:43474"/>
        <dbReference type="ChEBI" id="CHEBI:57795"/>
        <dbReference type="ChEBI" id="CHEBI:58456"/>
        <dbReference type="EC" id="3.1.3.78"/>
    </reaction>
</comment>
<comment type="subcellular location">
    <subcellularLocation>
        <location evidence="2">Late endosome membrane</location>
        <topology evidence="3">Multi-pass membrane protein</topology>
    </subcellularLocation>
    <subcellularLocation>
        <location evidence="2">Lysosome membrane</location>
        <topology evidence="3">Multi-pass membrane protein</topology>
    </subcellularLocation>
</comment>
<reference key="1">
    <citation type="submission" date="2005-02" db="EMBL/GenBank/DDBJ databases">
        <authorList>
            <consortium name="NIH - Xenopus Gene Collection (XGC) project"/>
        </authorList>
    </citation>
    <scope>NUCLEOTIDE SEQUENCE [LARGE SCALE MRNA]</scope>
    <source>
        <tissue>Egg</tissue>
    </source>
</reference>
<proteinExistence type="evidence at transcript level"/>
<dbReference type="EC" id="3.1.3.78" evidence="2"/>
<dbReference type="EMBL" id="BC090241">
    <property type="protein sequence ID" value="AAH90241.1"/>
    <property type="molecule type" value="mRNA"/>
</dbReference>
<dbReference type="RefSeq" id="NP_001089295.1">
    <property type="nucleotide sequence ID" value="NM_001095826.1"/>
</dbReference>
<dbReference type="SMR" id="Q5EAU3"/>
<dbReference type="DNASU" id="734343"/>
<dbReference type="GeneID" id="734343"/>
<dbReference type="KEGG" id="xla:734343"/>
<dbReference type="AGR" id="Xenbase:XB-GENE-951977"/>
<dbReference type="CTD" id="734343"/>
<dbReference type="Xenbase" id="XB-GENE-951977">
    <property type="gene designation" value="pip4p2.L"/>
</dbReference>
<dbReference type="OrthoDB" id="9939933at2759"/>
<dbReference type="Proteomes" id="UP000186698">
    <property type="component" value="Chromosome 6L"/>
</dbReference>
<dbReference type="Bgee" id="734343">
    <property type="expression patterns" value="Expressed in egg cell and 8 other cell types or tissues"/>
</dbReference>
<dbReference type="GO" id="GO:0031902">
    <property type="term" value="C:late endosome membrane"/>
    <property type="evidence" value="ECO:0000318"/>
    <property type="project" value="GO_Central"/>
</dbReference>
<dbReference type="GO" id="GO:0005765">
    <property type="term" value="C:lysosomal membrane"/>
    <property type="evidence" value="ECO:0000318"/>
    <property type="project" value="GO_Central"/>
</dbReference>
<dbReference type="GO" id="GO:0030670">
    <property type="term" value="C:phagocytic vesicle membrane"/>
    <property type="evidence" value="ECO:0000318"/>
    <property type="project" value="GO_Central"/>
</dbReference>
<dbReference type="GO" id="GO:0005886">
    <property type="term" value="C:plasma membrane"/>
    <property type="evidence" value="ECO:0000318"/>
    <property type="project" value="GO_Central"/>
</dbReference>
<dbReference type="GO" id="GO:0034597">
    <property type="term" value="F:phosphatidylinositol-4,5-bisphosphate 4-phosphatase activity"/>
    <property type="evidence" value="ECO:0000318"/>
    <property type="project" value="GO_Central"/>
</dbReference>
<dbReference type="GO" id="GO:0046856">
    <property type="term" value="P:phosphatidylinositol dephosphorylation"/>
    <property type="evidence" value="ECO:0000250"/>
    <property type="project" value="UniProtKB"/>
</dbReference>
<dbReference type="InterPro" id="IPR019178">
    <property type="entry name" value="PtdIns-P2-Ptase"/>
</dbReference>
<dbReference type="PANTHER" id="PTHR21014">
    <property type="entry name" value="PHOSPHATIDYLINOSITOL-4,5-BISPHOSPHATE 4-PHOSPHATASE"/>
    <property type="match status" value="1"/>
</dbReference>
<dbReference type="PANTHER" id="PTHR21014:SF5">
    <property type="entry name" value="TYPE 2 PHOSPHATIDYLINOSITOL 4,5-BISPHOSPHATE 4-PHOSPHATASE"/>
    <property type="match status" value="1"/>
</dbReference>
<dbReference type="Pfam" id="PF09788">
    <property type="entry name" value="Tmemb_55A"/>
    <property type="match status" value="1"/>
</dbReference>
<feature type="chain" id="PRO_0000235231" description="Type II phosphatidylinositol 4,5-bisphosphate 4-phosphatase">
    <location>
        <begin position="1"/>
        <end position="256"/>
    </location>
</feature>
<feature type="transmembrane region" description="Helical" evidence="3">
    <location>
        <begin position="191"/>
        <end position="211"/>
    </location>
</feature>
<feature type="transmembrane region" description="Helical" evidence="3">
    <location>
        <begin position="226"/>
        <end position="246"/>
    </location>
</feature>
<feature type="region of interest" description="Disordered" evidence="4">
    <location>
        <begin position="1"/>
        <end position="25"/>
    </location>
</feature>
<feature type="short sequence motif" description="CX5R motif">
    <location>
        <begin position="106"/>
        <end position="112"/>
    </location>
</feature>
<feature type="compositionally biased region" description="Basic and acidic residues" evidence="4">
    <location>
        <begin position="1"/>
        <end position="10"/>
    </location>
</feature>
<feature type="compositionally biased region" description="Polar residues" evidence="4">
    <location>
        <begin position="13"/>
        <end position="22"/>
    </location>
</feature>
<feature type="active site" evidence="1">
    <location>
        <position position="106"/>
    </location>
</feature>